<sequence length="182" mass="20936">MSMKGKETMSNEKIVVGKFGATYGIRGWLKVFSYTDNAESIFDYSPWFINQKGTWVEYKVESWKRHNKGMVAKLEGLDIREDAHLLTNFEIAIDPAVLPELSEDEFYWRELFGMQVVTTKGYDLGVVSDILETGSNDVLVVKANLKDAFGQKERLIPFLEEQVIIKVDREAQRIEVDWDPGF</sequence>
<accession>A7MYV0</accession>
<dbReference type="EMBL" id="CP000789">
    <property type="protein sequence ID" value="ABU72424.1"/>
    <property type="molecule type" value="Genomic_DNA"/>
</dbReference>
<dbReference type="RefSeq" id="WP_005534055.1">
    <property type="nucleotide sequence ID" value="NC_022269.1"/>
</dbReference>
<dbReference type="SMR" id="A7MYV0"/>
<dbReference type="GeneID" id="67376311"/>
<dbReference type="KEGG" id="vha:VIBHAR_03479"/>
<dbReference type="PATRIC" id="fig|338187.25.peg.2721"/>
<dbReference type="Proteomes" id="UP000008152">
    <property type="component" value="Chromosome I"/>
</dbReference>
<dbReference type="GO" id="GO:0005737">
    <property type="term" value="C:cytoplasm"/>
    <property type="evidence" value="ECO:0007669"/>
    <property type="project" value="UniProtKB-SubCell"/>
</dbReference>
<dbReference type="GO" id="GO:0005840">
    <property type="term" value="C:ribosome"/>
    <property type="evidence" value="ECO:0007669"/>
    <property type="project" value="InterPro"/>
</dbReference>
<dbReference type="GO" id="GO:0043022">
    <property type="term" value="F:ribosome binding"/>
    <property type="evidence" value="ECO:0007669"/>
    <property type="project" value="InterPro"/>
</dbReference>
<dbReference type="GO" id="GO:0042274">
    <property type="term" value="P:ribosomal small subunit biogenesis"/>
    <property type="evidence" value="ECO:0007669"/>
    <property type="project" value="UniProtKB-UniRule"/>
</dbReference>
<dbReference type="GO" id="GO:0006364">
    <property type="term" value="P:rRNA processing"/>
    <property type="evidence" value="ECO:0007669"/>
    <property type="project" value="UniProtKB-UniRule"/>
</dbReference>
<dbReference type="Gene3D" id="2.30.30.240">
    <property type="entry name" value="PRC-barrel domain"/>
    <property type="match status" value="1"/>
</dbReference>
<dbReference type="Gene3D" id="2.40.30.60">
    <property type="entry name" value="RimM"/>
    <property type="match status" value="1"/>
</dbReference>
<dbReference type="HAMAP" id="MF_00014">
    <property type="entry name" value="Ribosome_mat_RimM"/>
    <property type="match status" value="1"/>
</dbReference>
<dbReference type="InterPro" id="IPR027275">
    <property type="entry name" value="PRC-brl_dom"/>
</dbReference>
<dbReference type="InterPro" id="IPR011033">
    <property type="entry name" value="PRC_barrel-like_sf"/>
</dbReference>
<dbReference type="InterPro" id="IPR011961">
    <property type="entry name" value="RimM"/>
</dbReference>
<dbReference type="InterPro" id="IPR002676">
    <property type="entry name" value="RimM_N"/>
</dbReference>
<dbReference type="InterPro" id="IPR036976">
    <property type="entry name" value="RimM_N_sf"/>
</dbReference>
<dbReference type="InterPro" id="IPR009000">
    <property type="entry name" value="Transl_B-barrel_sf"/>
</dbReference>
<dbReference type="NCBIfam" id="TIGR02273">
    <property type="entry name" value="16S_RimM"/>
    <property type="match status" value="1"/>
</dbReference>
<dbReference type="PANTHER" id="PTHR33692">
    <property type="entry name" value="RIBOSOME MATURATION FACTOR RIMM"/>
    <property type="match status" value="1"/>
</dbReference>
<dbReference type="PANTHER" id="PTHR33692:SF1">
    <property type="entry name" value="RIBOSOME MATURATION FACTOR RIMM"/>
    <property type="match status" value="1"/>
</dbReference>
<dbReference type="Pfam" id="PF05239">
    <property type="entry name" value="PRC"/>
    <property type="match status" value="1"/>
</dbReference>
<dbReference type="Pfam" id="PF01782">
    <property type="entry name" value="RimM"/>
    <property type="match status" value="1"/>
</dbReference>
<dbReference type="SUPFAM" id="SSF50346">
    <property type="entry name" value="PRC-barrel domain"/>
    <property type="match status" value="1"/>
</dbReference>
<dbReference type="SUPFAM" id="SSF50447">
    <property type="entry name" value="Translation proteins"/>
    <property type="match status" value="1"/>
</dbReference>
<name>RIMM_VIBC1</name>
<reference key="1">
    <citation type="submission" date="2007-08" db="EMBL/GenBank/DDBJ databases">
        <authorList>
            <consortium name="The Vibrio harveyi Genome Sequencing Project"/>
            <person name="Bassler B."/>
            <person name="Clifton S.W."/>
            <person name="Fulton L."/>
            <person name="Delehaunty K."/>
            <person name="Fronick C."/>
            <person name="Harrison M."/>
            <person name="Markivic C."/>
            <person name="Fulton R."/>
            <person name="Tin-Wollam A.-M."/>
            <person name="Shah N."/>
            <person name="Pepin K."/>
            <person name="Nash W."/>
            <person name="Thiruvilangam P."/>
            <person name="Bhonagiri V."/>
            <person name="Waters C."/>
            <person name="Tu K.C."/>
            <person name="Irgon J."/>
            <person name="Wilson R.K."/>
        </authorList>
    </citation>
    <scope>NUCLEOTIDE SEQUENCE [LARGE SCALE GENOMIC DNA]</scope>
    <source>
        <strain>ATCC BAA-1116 / BB120</strain>
    </source>
</reference>
<comment type="function">
    <text evidence="1">An accessory protein needed during the final step in the assembly of 30S ribosomal subunit, possibly for assembly of the head region. Essential for efficient processing of 16S rRNA. May be needed both before and after RbfA during the maturation of 16S rRNA. It has affinity for free ribosomal 30S subunits but not for 70S ribosomes.</text>
</comment>
<comment type="subunit">
    <text evidence="1">Binds ribosomal protein uS19.</text>
</comment>
<comment type="subcellular location">
    <subcellularLocation>
        <location evidence="1">Cytoplasm</location>
    </subcellularLocation>
</comment>
<comment type="domain">
    <text evidence="1">The PRC barrel domain binds ribosomal protein uS19.</text>
</comment>
<comment type="similarity">
    <text evidence="1">Belongs to the RimM family.</text>
</comment>
<gene>
    <name evidence="1" type="primary">rimM</name>
    <name type="ordered locus">VIBHAR_03479</name>
</gene>
<protein>
    <recommendedName>
        <fullName evidence="1">Ribosome maturation factor RimM</fullName>
    </recommendedName>
</protein>
<feature type="chain" id="PRO_1000001245" description="Ribosome maturation factor RimM">
    <location>
        <begin position="1"/>
        <end position="182"/>
    </location>
</feature>
<feature type="domain" description="PRC barrel" evidence="1">
    <location>
        <begin position="103"/>
        <end position="182"/>
    </location>
</feature>
<proteinExistence type="inferred from homology"/>
<evidence type="ECO:0000255" key="1">
    <source>
        <dbReference type="HAMAP-Rule" id="MF_00014"/>
    </source>
</evidence>
<organism>
    <name type="scientific">Vibrio campbellii (strain ATCC BAA-1116)</name>
    <dbReference type="NCBI Taxonomy" id="2902295"/>
    <lineage>
        <taxon>Bacteria</taxon>
        <taxon>Pseudomonadati</taxon>
        <taxon>Pseudomonadota</taxon>
        <taxon>Gammaproteobacteria</taxon>
        <taxon>Vibrionales</taxon>
        <taxon>Vibrionaceae</taxon>
        <taxon>Vibrio</taxon>
    </lineage>
</organism>
<keyword id="KW-0143">Chaperone</keyword>
<keyword id="KW-0963">Cytoplasm</keyword>
<keyword id="KW-0690">Ribosome biogenesis</keyword>
<keyword id="KW-0698">rRNA processing</keyword>